<sequence>MLIIGERINGMFGDIKRAIQERDPAPVQEWARRQEEGGARALDLNVGPAVQDKVSAMEWLVEVTQEVSNLTLCLDSTNIKAIEAGLKKCKNRAMINSTNAEREKVEKLFPLAVEHGAALIGLTMNKTGIPKDSDTRLAFAMELVAAADEFGLPMEDLYIDPLILPANVAQDHAPEVLKTLQQIKMLADPAPKTVLGLSNVSQNCQNRPLINRTFLAMAMACGLDAAIADACDEALIETAATAEILLNQTVYCDSFVKMFKTR</sequence>
<organism>
    <name type="scientific">Moorella thermoacetica</name>
    <name type="common">Clostridium thermoaceticum</name>
    <dbReference type="NCBI Taxonomy" id="1525"/>
    <lineage>
        <taxon>Bacteria</taxon>
        <taxon>Bacillati</taxon>
        <taxon>Bacillota</taxon>
        <taxon>Clostridia</taxon>
        <taxon>Moorellales</taxon>
        <taxon>Moorellaceae</taxon>
        <taxon>Moorella</taxon>
    </lineage>
</organism>
<keyword id="KW-0002">3D-structure</keyword>
<keyword id="KW-0106">Calcium</keyword>
<keyword id="KW-0120">Carbon dioxide fixation</keyword>
<keyword id="KW-0846">Cobalamin</keyword>
<keyword id="KW-0170">Cobalt</keyword>
<keyword id="KW-0479">Metal-binding</keyword>
<keyword id="KW-0489">Methyltransferase</keyword>
<keyword id="KW-0808">Transferase</keyword>
<protein>
    <recommendedName>
        <fullName>5-methyltetrahydrofolate:corrinoid/iron-sulfur protein co-methyltransferase</fullName>
        <ecNumber>2.1.1.258</ecNumber>
    </recommendedName>
    <alternativeName>
        <fullName>5-methyltetrahydrofolate corrinoid/iron sulfur protein methyltransferase</fullName>
        <shortName>MeTr</shortName>
    </alternativeName>
</protein>
<name>ACSE_MOOTH</name>
<evidence type="ECO:0000255" key="1">
    <source>
        <dbReference type="PROSITE-ProRule" id="PRU00334"/>
    </source>
</evidence>
<evidence type="ECO:0000269" key="2">
    <source>
    </source>
</evidence>
<evidence type="ECO:0000269" key="3">
    <source>
    </source>
</evidence>
<evidence type="ECO:0000269" key="4">
    <source>
    </source>
</evidence>
<evidence type="ECO:0000305" key="5"/>
<evidence type="ECO:0000305" key="6">
    <source>
    </source>
</evidence>
<evidence type="ECO:0007744" key="7">
    <source>
        <dbReference type="PDB" id="2E7F"/>
    </source>
</evidence>
<evidence type="ECO:0007744" key="8">
    <source>
        <dbReference type="PDB" id="2OGY"/>
    </source>
</evidence>
<evidence type="ECO:0007744" key="9">
    <source>
        <dbReference type="PDB" id="4DJD"/>
    </source>
</evidence>
<evidence type="ECO:0007744" key="10">
    <source>
        <dbReference type="PDB" id="4DJE"/>
    </source>
</evidence>
<evidence type="ECO:0007744" key="11">
    <source>
        <dbReference type="PDB" id="4DJF"/>
    </source>
</evidence>
<evidence type="ECO:0007829" key="12">
    <source>
        <dbReference type="PDB" id="1F6Y"/>
    </source>
</evidence>
<proteinExistence type="evidence at protein level"/>
<reference key="1">
    <citation type="journal article" date="1994" name="J. Bacteriol.">
        <title>The reductive acetyl coenzyme A pathway: sequence and heterologous expression of active methyltetrahydrofolate:corrinoid/iron-sulfur protein methyltransferase from Clostridium thermoaceticum.</title>
        <authorList>
            <person name="Roberts D.L."/>
            <person name="Zhao S."/>
            <person name="Doukov T."/>
            <person name="Ragsdale S.W."/>
        </authorList>
    </citation>
    <scope>NUCLEOTIDE SEQUENCE [GENOMIC DNA]</scope>
    <scope>FUNCTION</scope>
    <scope>CATALYTIC ACTIVITY</scope>
    <source>
        <strain>ATCC 35608 / DSM 521 / JCM 9319</strain>
    </source>
</reference>
<reference key="2">
    <citation type="journal article" date="2000" name="Structure">
        <title>Crystal structure of a methyltetrahydrofolate- and corrinoid-dependent methyltransferase.</title>
        <authorList>
            <person name="Doukov T."/>
            <person name="Seravalli J."/>
            <person name="Stezowski J.J."/>
            <person name="Ragsdale S.W."/>
        </authorList>
    </citation>
    <scope>X-RAY CRYSTALLOGRAPHY (2.20 ANGSTROMS)</scope>
</reference>
<reference evidence="7 8" key="3">
    <citation type="journal article" date="2007" name="J. Biol. Chem.">
        <title>Structural and kinetic evidence for an extended hydrogen-bonding network in catalysis of methyl group transfer. Role of an active site asparagine residue in activation of methyl transfer by methyltransferases.</title>
        <authorList>
            <person name="Doukov T.I."/>
            <person name="Hemmi H."/>
            <person name="Drennan C.L."/>
            <person name="Ragsdale S.W."/>
        </authorList>
    </citation>
    <scope>X-RAY CRYSTALLOGRAPHY (2.20 ANGSTROMS) IN COMPLEX WITH METHYLTETRAHYDROFOLATE AND CALCIUM</scope>
    <scope>FUNCTION</scope>
    <scope>CATALYTIC ACTIVITY</scope>
    <scope>COFACTOR</scope>
    <scope>MUTAGENESIS OF ASN-199</scope>
</reference>
<reference evidence="9 10 11" key="4">
    <citation type="journal article" date="2012" name="Nature">
        <title>Visualizing molecular juggling within a B12-dependent methyltransferase complex.</title>
        <authorList>
            <person name="Kung Y."/>
            <person name="Ando N."/>
            <person name="Doukov T.I."/>
            <person name="Blasiak L.C."/>
            <person name="Bender G."/>
            <person name="Seravalli J."/>
            <person name="Ragsdale S.W."/>
            <person name="Drennan C.L."/>
        </authorList>
    </citation>
    <scope>X-RAY CRYSTALLOGRAPHY (2.38 ANGSTROMS) IN COMPLEX WITH ACSC; ACSD; METHYLTETRAHYDROFOLATE; COBALAMIN AND CALCIUM</scope>
    <scope>FUNCTION</scope>
    <scope>CATALYTIC ACTIVITY</scope>
    <scope>COFACTOR</scope>
    <scope>SUBUNIT</scope>
</reference>
<dbReference type="EC" id="2.1.1.258"/>
<dbReference type="EMBL" id="L34780">
    <property type="protein sequence ID" value="AAA53548.2"/>
    <property type="molecule type" value="Genomic_DNA"/>
</dbReference>
<dbReference type="PIR" id="I40795">
    <property type="entry name" value="I40795"/>
</dbReference>
<dbReference type="RefSeq" id="WP_011392711.1">
    <property type="nucleotide sequence ID" value="NZ_VCDY01000001.1"/>
</dbReference>
<dbReference type="PDB" id="1F6Y">
    <property type="method" value="X-ray"/>
    <property type="resolution" value="2.20 A"/>
    <property type="chains" value="A/B=1-262"/>
</dbReference>
<dbReference type="PDB" id="2E7F">
    <property type="method" value="X-ray"/>
    <property type="resolution" value="2.20 A"/>
    <property type="chains" value="A/B=1-262"/>
</dbReference>
<dbReference type="PDB" id="2OGY">
    <property type="method" value="X-ray"/>
    <property type="resolution" value="2.30 A"/>
    <property type="chains" value="A/B=1-262"/>
</dbReference>
<dbReference type="PDB" id="4DJD">
    <property type="method" value="X-ray"/>
    <property type="resolution" value="2.38 A"/>
    <property type="chains" value="A/B=1-262"/>
</dbReference>
<dbReference type="PDB" id="4DJE">
    <property type="method" value="X-ray"/>
    <property type="resolution" value="3.50 A"/>
    <property type="chains" value="A/B=1-262"/>
</dbReference>
<dbReference type="PDB" id="4DJF">
    <property type="method" value="X-ray"/>
    <property type="resolution" value="3.03 A"/>
    <property type="chains" value="A/B=1-262"/>
</dbReference>
<dbReference type="PDBsum" id="1F6Y"/>
<dbReference type="PDBsum" id="2E7F"/>
<dbReference type="PDBsum" id="2OGY"/>
<dbReference type="PDBsum" id="4DJD"/>
<dbReference type="PDBsum" id="4DJE"/>
<dbReference type="PDBsum" id="4DJF"/>
<dbReference type="SMR" id="Q46389"/>
<dbReference type="DIP" id="DIP-59668N"/>
<dbReference type="IntAct" id="Q46389">
    <property type="interactions" value="1"/>
</dbReference>
<dbReference type="OMA" id="IERVFPM"/>
<dbReference type="BioCyc" id="MetaCyc:METHCOCLTH-MONOMER"/>
<dbReference type="BRENDA" id="2.1.1.258">
    <property type="organism ID" value="1528"/>
</dbReference>
<dbReference type="EvolutionaryTrace" id="Q46389"/>
<dbReference type="GO" id="GO:0005829">
    <property type="term" value="C:cytosol"/>
    <property type="evidence" value="ECO:0007669"/>
    <property type="project" value="TreeGrafter"/>
</dbReference>
<dbReference type="GO" id="GO:0005509">
    <property type="term" value="F:calcium ion binding"/>
    <property type="evidence" value="ECO:0000314"/>
    <property type="project" value="UniProtKB"/>
</dbReference>
<dbReference type="GO" id="GO:0031419">
    <property type="term" value="F:cobalamin binding"/>
    <property type="evidence" value="ECO:0007669"/>
    <property type="project" value="UniProtKB-KW"/>
</dbReference>
<dbReference type="GO" id="GO:0008705">
    <property type="term" value="F:methionine synthase activity"/>
    <property type="evidence" value="ECO:0007669"/>
    <property type="project" value="TreeGrafter"/>
</dbReference>
<dbReference type="GO" id="GO:0102036">
    <property type="term" value="F:methyltetrahydrofolate:corrinoid/iron-sulfur protein methyltransferase activity"/>
    <property type="evidence" value="ECO:0007669"/>
    <property type="project" value="UniProtKB-EC"/>
</dbReference>
<dbReference type="GO" id="GO:0008168">
    <property type="term" value="F:methyltransferase activity"/>
    <property type="evidence" value="ECO:0000314"/>
    <property type="project" value="UniProtKB"/>
</dbReference>
<dbReference type="GO" id="GO:0015977">
    <property type="term" value="P:carbon fixation"/>
    <property type="evidence" value="ECO:0000314"/>
    <property type="project" value="UniProtKB"/>
</dbReference>
<dbReference type="GO" id="GO:0050667">
    <property type="term" value="P:homocysteine metabolic process"/>
    <property type="evidence" value="ECO:0007669"/>
    <property type="project" value="TreeGrafter"/>
</dbReference>
<dbReference type="GO" id="GO:0032259">
    <property type="term" value="P:methylation"/>
    <property type="evidence" value="ECO:0007669"/>
    <property type="project" value="UniProtKB-KW"/>
</dbReference>
<dbReference type="GO" id="GO:0046653">
    <property type="term" value="P:tetrahydrofolate metabolic process"/>
    <property type="evidence" value="ECO:0007669"/>
    <property type="project" value="TreeGrafter"/>
</dbReference>
<dbReference type="FunFam" id="3.20.20.20:FF:000019">
    <property type="entry name" value="5-methyltetrahydrofolate:corrinoid/iron-sulfur protein co-methyltransferase"/>
    <property type="match status" value="1"/>
</dbReference>
<dbReference type="Gene3D" id="3.20.20.20">
    <property type="entry name" value="Dihydropteroate synthase-like"/>
    <property type="match status" value="1"/>
</dbReference>
<dbReference type="InterPro" id="IPR011005">
    <property type="entry name" value="Dihydropteroate_synth-like_sf"/>
</dbReference>
<dbReference type="InterPro" id="IPR050554">
    <property type="entry name" value="Met_Synthase/Corrinoid"/>
</dbReference>
<dbReference type="InterPro" id="IPR000489">
    <property type="entry name" value="Pterin-binding_dom"/>
</dbReference>
<dbReference type="NCBIfam" id="NF005719">
    <property type="entry name" value="PRK07535.1"/>
    <property type="match status" value="1"/>
</dbReference>
<dbReference type="PANTHER" id="PTHR45833">
    <property type="entry name" value="METHIONINE SYNTHASE"/>
    <property type="match status" value="1"/>
</dbReference>
<dbReference type="PANTHER" id="PTHR45833:SF1">
    <property type="entry name" value="METHIONINE SYNTHASE"/>
    <property type="match status" value="1"/>
</dbReference>
<dbReference type="Pfam" id="PF00809">
    <property type="entry name" value="Pterin_bind"/>
    <property type="match status" value="1"/>
</dbReference>
<dbReference type="SUPFAM" id="SSF51717">
    <property type="entry name" value="Dihydropteroate synthetase-like"/>
    <property type="match status" value="1"/>
</dbReference>
<dbReference type="PROSITE" id="PS50972">
    <property type="entry name" value="PTERIN_BINDING"/>
    <property type="match status" value="1"/>
</dbReference>
<feature type="chain" id="PRO_0000422560" description="5-methyltetrahydrofolate:corrinoid/iron-sulfur protein co-methyltransferase">
    <location>
        <begin position="1"/>
        <end position="262"/>
    </location>
</feature>
<feature type="domain" description="Pterin-binding" evidence="1">
    <location>
        <begin position="1"/>
        <end position="246"/>
    </location>
</feature>
<feature type="binding site" evidence="2 3 10 11">
    <location>
        <position position="96"/>
    </location>
    <ligand>
        <name>(6S)-5-methyl-5,6,7,8-tetrahydrofolate</name>
        <dbReference type="ChEBI" id="CHEBI:18608"/>
    </ligand>
</feature>
<feature type="binding site" evidence="2 3 10 11">
    <location>
        <position position="160"/>
    </location>
    <ligand>
        <name>(6S)-5-methyl-5,6,7,8-tetrahydrofolate</name>
        <dbReference type="ChEBI" id="CHEBI:18608"/>
    </ligand>
</feature>
<feature type="binding site" evidence="2 3">
    <location>
        <position position="184"/>
    </location>
    <ligand>
        <name>Ca(2+)</name>
        <dbReference type="ChEBI" id="CHEBI:29108"/>
        <label>1</label>
    </ligand>
</feature>
<feature type="binding site" evidence="2 3 10 11">
    <location>
        <position position="199"/>
    </location>
    <ligand>
        <name>(6S)-5-methyl-5,6,7,8-tetrahydrofolate</name>
        <dbReference type="ChEBI" id="CHEBI:18608"/>
    </ligand>
</feature>
<feature type="binding site" evidence="6 11">
    <location>
        <begin position="202"/>
        <end position="203"/>
    </location>
    <ligand>
        <name>methylcob(III)alamin</name>
        <dbReference type="ChEBI" id="CHEBI:28115"/>
    </ligand>
</feature>
<feature type="binding site" evidence="2 3 11">
    <location>
        <position position="202"/>
    </location>
    <ligand>
        <name>(6S)-5-methyl-5,6,7,8-tetrahydrofolate</name>
        <dbReference type="ChEBI" id="CHEBI:18608"/>
    </ligand>
</feature>
<feature type="binding site" evidence="2 3 10 11">
    <location>
        <position position="207"/>
    </location>
    <ligand>
        <name>(6S)-5-methyl-5,6,7,8-tetrahydrofolate</name>
        <dbReference type="ChEBI" id="CHEBI:18608"/>
    </ligand>
</feature>
<feature type="binding site" evidence="2 3">
    <location>
        <position position="222"/>
    </location>
    <ligand>
        <name>Ca(2+)</name>
        <dbReference type="ChEBI" id="CHEBI:29108"/>
        <label>1</label>
    </ligand>
</feature>
<feature type="binding site" evidence="2 3">
    <location>
        <position position="222"/>
    </location>
    <ligand>
        <name>Ca(2+)</name>
        <dbReference type="ChEBI" id="CHEBI:29108"/>
        <label>2</label>
    </ligand>
</feature>
<feature type="binding site" evidence="2 3">
    <location>
        <position position="224"/>
    </location>
    <ligand>
        <name>Ca(2+)</name>
        <dbReference type="ChEBI" id="CHEBI:29108"/>
        <label>1</label>
    </ligand>
</feature>
<feature type="binding site" evidence="2 3">
    <location>
        <position position="224"/>
    </location>
    <ligand>
        <name>Ca(2+)</name>
        <dbReference type="ChEBI" id="CHEBI:29108"/>
        <label>2</label>
    </ligand>
</feature>
<feature type="site" description="Transition state stabilizer">
    <location>
        <position position="199"/>
    </location>
</feature>
<feature type="mutagenesis site" description="20-fold decreased affinity for methyltetrahydrofolate and nearly abolished catalytic activity." evidence="2">
    <original>N</original>
    <variation>A</variation>
    <location>
        <position position="199"/>
    </location>
</feature>
<feature type="strand" evidence="12">
    <location>
        <begin position="2"/>
        <end position="5"/>
    </location>
</feature>
<feature type="helix" evidence="12">
    <location>
        <begin position="13"/>
        <end position="21"/>
    </location>
</feature>
<feature type="helix" evidence="12">
    <location>
        <begin position="24"/>
        <end position="37"/>
    </location>
</feature>
<feature type="strand" evidence="12">
    <location>
        <begin position="40"/>
        <end position="45"/>
    </location>
</feature>
<feature type="helix" evidence="12">
    <location>
        <begin position="53"/>
        <end position="65"/>
    </location>
</feature>
<feature type="strand" evidence="12">
    <location>
        <begin position="70"/>
        <end position="75"/>
    </location>
</feature>
<feature type="helix" evidence="12">
    <location>
        <begin position="79"/>
        <end position="88"/>
    </location>
</feature>
<feature type="strand" evidence="12">
    <location>
        <begin position="93"/>
        <end position="98"/>
    </location>
</feature>
<feature type="helix" evidence="12">
    <location>
        <begin position="102"/>
        <end position="114"/>
    </location>
</feature>
<feature type="strand" evidence="12">
    <location>
        <begin position="118"/>
        <end position="123"/>
    </location>
</feature>
<feature type="helix" evidence="12">
    <location>
        <begin position="133"/>
        <end position="150"/>
    </location>
</feature>
<feature type="helix" evidence="12">
    <location>
        <begin position="154"/>
        <end position="156"/>
    </location>
</feature>
<feature type="strand" evidence="12">
    <location>
        <begin position="157"/>
        <end position="160"/>
    </location>
</feature>
<feature type="turn" evidence="12">
    <location>
        <begin position="166"/>
        <end position="168"/>
    </location>
</feature>
<feature type="helix" evidence="12">
    <location>
        <begin position="172"/>
        <end position="184"/>
    </location>
</feature>
<feature type="strand" evidence="12">
    <location>
        <begin position="192"/>
        <end position="196"/>
    </location>
</feature>
<feature type="helix" evidence="12">
    <location>
        <begin position="197"/>
        <end position="201"/>
    </location>
</feature>
<feature type="helix" evidence="12">
    <location>
        <begin position="207"/>
        <end position="220"/>
    </location>
</feature>
<feature type="strand" evidence="12">
    <location>
        <begin position="225"/>
        <end position="228"/>
    </location>
</feature>
<feature type="helix" evidence="12">
    <location>
        <begin position="233"/>
        <end position="245"/>
    </location>
</feature>
<feature type="helix" evidence="12">
    <location>
        <begin position="255"/>
        <end position="261"/>
    </location>
</feature>
<comment type="function">
    <text evidence="2 3 4">Methyltransferase that mediates the transfer of a N5-methyl group of (6S)-methyltetrahydrofolate to the 5-methoxybenzimidazolylcobamide cofactor of a corrinoid/Fe-S protein (AcsC/AcsD) in the anaerobic acetyl-CoA pathway (Wood-Ljungdahl pathway) of carbon monoxide and carbon dioxide fixation.</text>
</comment>
<comment type="catalytic activity">
    <reaction evidence="2 3 4">
        <text>methyl-Co(III)-[corrinoid Fe-S protein] + (6S)-5,6,7,8-tetrahydrofolate = Co(I)-[corrinoid Fe-S protein] + (6S)-5-methyl-5,6,7,8-tetrahydrofolate + H(+)</text>
        <dbReference type="Rhea" id="RHEA:45200"/>
        <dbReference type="Rhea" id="RHEA-COMP:11110"/>
        <dbReference type="Rhea" id="RHEA-COMP:11111"/>
        <dbReference type="ChEBI" id="CHEBI:15378"/>
        <dbReference type="ChEBI" id="CHEBI:18608"/>
        <dbReference type="ChEBI" id="CHEBI:57453"/>
        <dbReference type="ChEBI" id="CHEBI:85033"/>
        <dbReference type="ChEBI" id="CHEBI:85035"/>
        <dbReference type="EC" id="2.1.1.258"/>
    </reaction>
</comment>
<comment type="cofactor">
    <cofactor evidence="2 3">
        <name>Ca(2+)</name>
        <dbReference type="ChEBI" id="CHEBI:29108"/>
    </cofactor>
</comment>
<comment type="subunit">
    <text evidence="2 3">Heterohexamer composed of 2 subunits of AcsC, 2 subunits of AcsD and 2 subunits of AcsE.</text>
</comment>
<comment type="similarity">
    <text evidence="5">Belongs to the vitamin-B12 dependent methionine synthase family.</text>
</comment>
<gene>
    <name type="primary">acsE</name>
</gene>
<accession>Q46389</accession>